<proteinExistence type="evidence at protein level"/>
<feature type="chain" id="PRO_0000184007" description="Alpha-1-syntrophin">
    <location>
        <begin position="1"/>
        <end position="503"/>
    </location>
</feature>
<feature type="domain" description="PH 1" evidence="4">
    <location>
        <begin position="6"/>
        <end position="263"/>
    </location>
</feature>
<feature type="domain" description="PDZ" evidence="3">
    <location>
        <begin position="81"/>
        <end position="164"/>
    </location>
</feature>
<feature type="domain" description="PH 2" evidence="4">
    <location>
        <begin position="287"/>
        <end position="399"/>
    </location>
</feature>
<feature type="domain" description="SU">
    <location>
        <begin position="447"/>
        <end position="503"/>
    </location>
</feature>
<feature type="region of interest" description="Disordered" evidence="5">
    <location>
        <begin position="40"/>
        <end position="68"/>
    </location>
</feature>
<feature type="region of interest" description="Disordered" evidence="5">
    <location>
        <begin position="177"/>
        <end position="203"/>
    </location>
</feature>
<feature type="region of interest" description="Calmodulin-binding">
    <location>
        <begin position="481"/>
        <end position="503"/>
    </location>
</feature>
<feature type="modified residue" description="Phosphoserine" evidence="17">
    <location>
        <position position="95"/>
    </location>
</feature>
<feature type="modified residue" description="Phosphoserine" evidence="2">
    <location>
        <position position="178"/>
    </location>
</feature>
<feature type="modified residue" description="Phosphoserine" evidence="16 17">
    <location>
        <position position="183"/>
    </location>
</feature>
<feature type="modified residue" description="Phosphoserine" evidence="16 17">
    <location>
        <position position="187"/>
    </location>
</feature>
<feature type="modified residue" description="Phosphoserine" evidence="17">
    <location>
        <position position="194"/>
    </location>
</feature>
<feature type="sequence conflict" description="In Ref. 2; AAH18546." evidence="15" ref="2">
    <original>R</original>
    <variation>C</variation>
    <location>
        <position position="16"/>
    </location>
</feature>
<feature type="sequence conflict" description="In Ref. 2; AAH18546." evidence="15" ref="2">
    <location>
        <begin position="341"/>
        <end position="344"/>
    </location>
</feature>
<feature type="sequence conflict" description="In Ref. 2; AAH18546." evidence="15" ref="2">
    <original>I</original>
    <variation>V</variation>
    <location>
        <position position="405"/>
    </location>
</feature>
<feature type="strand" evidence="20">
    <location>
        <begin position="9"/>
        <end position="16"/>
    </location>
</feature>
<feature type="strand" evidence="21">
    <location>
        <begin position="20"/>
        <end position="24"/>
    </location>
</feature>
<feature type="strand" evidence="20">
    <location>
        <begin position="28"/>
        <end position="35"/>
    </location>
</feature>
<feature type="strand" evidence="20">
    <location>
        <begin position="37"/>
        <end position="43"/>
    </location>
</feature>
<feature type="strand" evidence="20">
    <location>
        <begin position="63"/>
        <end position="67"/>
    </location>
</feature>
<feature type="turn" evidence="21">
    <location>
        <begin position="75"/>
        <end position="77"/>
    </location>
</feature>
<feature type="strand" evidence="18">
    <location>
        <begin position="80"/>
        <end position="85"/>
    </location>
</feature>
<feature type="turn" evidence="18">
    <location>
        <begin position="88"/>
        <end position="90"/>
    </location>
</feature>
<feature type="strand" evidence="18">
    <location>
        <begin position="94"/>
        <end position="99"/>
    </location>
</feature>
<feature type="helix" evidence="18">
    <location>
        <begin position="100"/>
        <end position="102"/>
    </location>
</feature>
<feature type="strand" evidence="18">
    <location>
        <begin position="104"/>
        <end position="111"/>
    </location>
</feature>
<feature type="strand" evidence="19">
    <location>
        <begin position="113"/>
        <end position="115"/>
    </location>
</feature>
<feature type="helix" evidence="18">
    <location>
        <begin position="116"/>
        <end position="119"/>
    </location>
</feature>
<feature type="strand" evidence="18">
    <location>
        <begin position="127"/>
        <end position="132"/>
    </location>
</feature>
<feature type="helix" evidence="19">
    <location>
        <begin position="137"/>
        <end position="139"/>
    </location>
</feature>
<feature type="helix" evidence="18">
    <location>
        <begin position="142"/>
        <end position="150"/>
    </location>
</feature>
<feature type="strand" evidence="18">
    <location>
        <begin position="154"/>
        <end position="162"/>
    </location>
</feature>
<feature type="strand" evidence="20">
    <location>
        <begin position="164"/>
        <end position="167"/>
    </location>
</feature>
<feature type="strand" evidence="20">
    <location>
        <begin position="169"/>
        <end position="171"/>
    </location>
</feature>
<feature type="strand" evidence="21">
    <location>
        <begin position="176"/>
        <end position="178"/>
    </location>
</feature>
<feature type="strand" evidence="20">
    <location>
        <begin position="180"/>
        <end position="182"/>
    </location>
</feature>
<feature type="strand" evidence="20">
    <location>
        <begin position="189"/>
        <end position="193"/>
    </location>
</feature>
<feature type="strand" evidence="20">
    <location>
        <begin position="195"/>
        <end position="197"/>
    </location>
</feature>
<feature type="strand" evidence="20">
    <location>
        <begin position="207"/>
        <end position="219"/>
    </location>
</feature>
<feature type="strand" evidence="20">
    <location>
        <begin position="225"/>
        <end position="227"/>
    </location>
</feature>
<feature type="strand" evidence="20">
    <location>
        <begin position="229"/>
        <end position="234"/>
    </location>
</feature>
<feature type="turn" evidence="20">
    <location>
        <begin position="235"/>
        <end position="238"/>
    </location>
</feature>
<feature type="strand" evidence="20">
    <location>
        <begin position="239"/>
        <end position="244"/>
    </location>
</feature>
<feature type="helix" evidence="20">
    <location>
        <begin position="248"/>
        <end position="262"/>
    </location>
</feature>
<keyword id="KW-0002">3D-structure</keyword>
<keyword id="KW-0009">Actin-binding</keyword>
<keyword id="KW-0106">Calcium</keyword>
<keyword id="KW-0112">Calmodulin-binding</keyword>
<keyword id="KW-0965">Cell junction</keyword>
<keyword id="KW-1003">Cell membrane</keyword>
<keyword id="KW-0963">Cytoplasm</keyword>
<keyword id="KW-0206">Cytoskeleton</keyword>
<keyword id="KW-0903">Direct protein sequencing</keyword>
<keyword id="KW-0472">Membrane</keyword>
<keyword id="KW-0597">Phosphoprotein</keyword>
<keyword id="KW-1185">Reference proteome</keyword>
<keyword id="KW-0677">Repeat</keyword>
<dbReference type="EMBL" id="U00677">
    <property type="protein sequence ID" value="AAC52119.1"/>
    <property type="molecule type" value="mRNA"/>
</dbReference>
<dbReference type="EMBL" id="BC018546">
    <property type="protein sequence ID" value="AAH18546.1"/>
    <property type="molecule type" value="mRNA"/>
</dbReference>
<dbReference type="PIR" id="I84771">
    <property type="entry name" value="I84771"/>
</dbReference>
<dbReference type="PDB" id="1QAV">
    <property type="method" value="X-ray"/>
    <property type="resolution" value="1.90 A"/>
    <property type="chains" value="A=77-164"/>
</dbReference>
<dbReference type="PDB" id="1Z86">
    <property type="method" value="NMR"/>
    <property type="chains" value="A=79-165"/>
</dbReference>
<dbReference type="PDB" id="1Z87">
    <property type="method" value="NMR"/>
    <property type="chains" value="A=2-264"/>
</dbReference>
<dbReference type="PDB" id="2ADZ">
    <property type="method" value="NMR"/>
    <property type="chains" value="A=2-264"/>
</dbReference>
<dbReference type="PDB" id="2PDZ">
    <property type="method" value="NMR"/>
    <property type="chains" value="A=79-164"/>
</dbReference>
<dbReference type="PDB" id="4HOP">
    <property type="method" value="X-ray"/>
    <property type="resolution" value="2.29 A"/>
    <property type="chains" value="A/C/E=77-162"/>
</dbReference>
<dbReference type="PDBsum" id="1QAV"/>
<dbReference type="PDBsum" id="1Z86"/>
<dbReference type="PDBsum" id="1Z87"/>
<dbReference type="PDBsum" id="2ADZ"/>
<dbReference type="PDBsum" id="2PDZ"/>
<dbReference type="PDBsum" id="4HOP"/>
<dbReference type="BMRB" id="Q61234"/>
<dbReference type="SMR" id="Q61234"/>
<dbReference type="CORUM" id="Q61234"/>
<dbReference type="DIP" id="DIP-32898N"/>
<dbReference type="FunCoup" id="Q61234">
    <property type="interactions" value="238"/>
</dbReference>
<dbReference type="IntAct" id="Q61234">
    <property type="interactions" value="23"/>
</dbReference>
<dbReference type="MINT" id="Q61234"/>
<dbReference type="STRING" id="10090.ENSMUSP00000105350"/>
<dbReference type="GlyGen" id="Q61234">
    <property type="glycosylation" value="2 sites, 1 O-linked glycan (1 site)"/>
</dbReference>
<dbReference type="iPTMnet" id="Q61234"/>
<dbReference type="PhosphoSitePlus" id="Q61234"/>
<dbReference type="jPOST" id="Q61234"/>
<dbReference type="PaxDb" id="10090-ENSMUSP00000028991"/>
<dbReference type="PeptideAtlas" id="Q61234"/>
<dbReference type="ProteomicsDB" id="257540"/>
<dbReference type="Antibodypedia" id="10673">
    <property type="antibodies" value="454 antibodies from 34 providers"/>
</dbReference>
<dbReference type="Ensembl" id="ENSMUST00000028991.7">
    <property type="protein sequence ID" value="ENSMUSP00000028991.7"/>
    <property type="gene ID" value="ENSMUSG00000027488.13"/>
</dbReference>
<dbReference type="AGR" id="MGI:101772"/>
<dbReference type="MGI" id="MGI:101772">
    <property type="gene designation" value="Snta1"/>
</dbReference>
<dbReference type="VEuPathDB" id="HostDB:ENSMUSG00000027488"/>
<dbReference type="eggNOG" id="KOG3551">
    <property type="taxonomic scope" value="Eukaryota"/>
</dbReference>
<dbReference type="GeneTree" id="ENSGT00950000182863"/>
<dbReference type="InParanoid" id="Q61234"/>
<dbReference type="OMA" id="DLRCCPK"/>
<dbReference type="OrthoDB" id="409749at2759"/>
<dbReference type="PhylomeDB" id="Q61234"/>
<dbReference type="TreeFam" id="TF317932"/>
<dbReference type="Reactome" id="R-MMU-9913351">
    <property type="pathway name" value="Formation of the dystrophin-glycoprotein complex (DGC)"/>
</dbReference>
<dbReference type="ChiTaRS" id="Frs2">
    <property type="organism name" value="mouse"/>
</dbReference>
<dbReference type="EvolutionaryTrace" id="Q61234"/>
<dbReference type="PRO" id="PR:Q61234"/>
<dbReference type="Proteomes" id="UP000000589">
    <property type="component" value="Chromosome 2"/>
</dbReference>
<dbReference type="RNAct" id="Q61234">
    <property type="molecule type" value="protein"/>
</dbReference>
<dbReference type="Bgee" id="ENSMUSG00000027488">
    <property type="expression patterns" value="Expressed in hindlimb stylopod muscle and 207 other cell types or tissues"/>
</dbReference>
<dbReference type="ExpressionAtlas" id="Q61234">
    <property type="expression patterns" value="baseline and differential"/>
</dbReference>
<dbReference type="GO" id="GO:0070161">
    <property type="term" value="C:anchoring junction"/>
    <property type="evidence" value="ECO:0007669"/>
    <property type="project" value="UniProtKB-SubCell"/>
</dbReference>
<dbReference type="GO" id="GO:0005737">
    <property type="term" value="C:cytoplasm"/>
    <property type="evidence" value="ECO:0007669"/>
    <property type="project" value="UniProtKB-KW"/>
</dbReference>
<dbReference type="GO" id="GO:0005856">
    <property type="term" value="C:cytoskeleton"/>
    <property type="evidence" value="ECO:0007669"/>
    <property type="project" value="UniProtKB-SubCell"/>
</dbReference>
<dbReference type="GO" id="GO:0045211">
    <property type="term" value="C:postsynaptic membrane"/>
    <property type="evidence" value="ECO:0000314"/>
    <property type="project" value="MGI"/>
</dbReference>
<dbReference type="GO" id="GO:0032991">
    <property type="term" value="C:protein-containing complex"/>
    <property type="evidence" value="ECO:0000266"/>
    <property type="project" value="MGI"/>
</dbReference>
<dbReference type="GO" id="GO:0042383">
    <property type="term" value="C:sarcolemma"/>
    <property type="evidence" value="ECO:0000314"/>
    <property type="project" value="MGI"/>
</dbReference>
<dbReference type="GO" id="GO:0003779">
    <property type="term" value="F:actin binding"/>
    <property type="evidence" value="ECO:0007669"/>
    <property type="project" value="UniProtKB-KW"/>
</dbReference>
<dbReference type="GO" id="GO:0005516">
    <property type="term" value="F:calmodulin binding"/>
    <property type="evidence" value="ECO:0007669"/>
    <property type="project" value="UniProtKB-KW"/>
</dbReference>
<dbReference type="GO" id="GO:0005198">
    <property type="term" value="F:structural molecule activity"/>
    <property type="evidence" value="ECO:0007669"/>
    <property type="project" value="InterPro"/>
</dbReference>
<dbReference type="GO" id="GO:0044325">
    <property type="term" value="F:transmembrane transporter binding"/>
    <property type="evidence" value="ECO:0000353"/>
    <property type="project" value="BHF-UCL"/>
</dbReference>
<dbReference type="GO" id="GO:0007528">
    <property type="term" value="P:neuromuscular junction development"/>
    <property type="evidence" value="ECO:0000315"/>
    <property type="project" value="MGI"/>
</dbReference>
<dbReference type="GO" id="GO:0003117">
    <property type="term" value="P:regulation of vasoconstriction by circulating norepinephrine"/>
    <property type="evidence" value="ECO:0000315"/>
    <property type="project" value="MGI"/>
</dbReference>
<dbReference type="CDD" id="cd06801">
    <property type="entry name" value="PDZ_syntrophin-like"/>
    <property type="match status" value="1"/>
</dbReference>
<dbReference type="CDD" id="cd01258">
    <property type="entry name" value="PHsplit_syntrophin"/>
    <property type="match status" value="1"/>
</dbReference>
<dbReference type="FunFam" id="2.30.29.30:FF:000329">
    <property type="entry name" value="alpha-1-syntrophin"/>
    <property type="match status" value="1"/>
</dbReference>
<dbReference type="FunFam" id="2.30.42.10:FF:000052">
    <property type="entry name" value="Syntrophin beta 1"/>
    <property type="match status" value="1"/>
</dbReference>
<dbReference type="Gene3D" id="2.30.42.10">
    <property type="match status" value="1"/>
</dbReference>
<dbReference type="Gene3D" id="2.30.29.30">
    <property type="entry name" value="Pleckstrin-homology domain (PH domain)/Phosphotyrosine-binding domain (PTB)"/>
    <property type="match status" value="2"/>
</dbReference>
<dbReference type="InterPro" id="IPR001478">
    <property type="entry name" value="PDZ"/>
</dbReference>
<dbReference type="InterPro" id="IPR036034">
    <property type="entry name" value="PDZ_sf"/>
</dbReference>
<dbReference type="InterPro" id="IPR011993">
    <property type="entry name" value="PH-like_dom_sf"/>
</dbReference>
<dbReference type="InterPro" id="IPR001849">
    <property type="entry name" value="PH_domain"/>
</dbReference>
<dbReference type="InterPro" id="IPR041428">
    <property type="entry name" value="PHsplit_syntrophin"/>
</dbReference>
<dbReference type="InterPro" id="IPR015482">
    <property type="entry name" value="Syntrophin"/>
</dbReference>
<dbReference type="InterPro" id="IPR055108">
    <property type="entry name" value="Syntrophin_4th"/>
</dbReference>
<dbReference type="PANTHER" id="PTHR10554:SF6">
    <property type="entry name" value="ALPHA-1-SYNTROPHIN"/>
    <property type="match status" value="1"/>
</dbReference>
<dbReference type="PANTHER" id="PTHR10554">
    <property type="entry name" value="SYNTROPHIN"/>
    <property type="match status" value="1"/>
</dbReference>
<dbReference type="Pfam" id="PF00595">
    <property type="entry name" value="PDZ"/>
    <property type="match status" value="1"/>
</dbReference>
<dbReference type="Pfam" id="PF00169">
    <property type="entry name" value="PH"/>
    <property type="match status" value="1"/>
</dbReference>
<dbReference type="Pfam" id="PF18012">
    <property type="entry name" value="PH_17"/>
    <property type="match status" value="1"/>
</dbReference>
<dbReference type="Pfam" id="PF23012">
    <property type="entry name" value="Syntrophin_4th"/>
    <property type="match status" value="1"/>
</dbReference>
<dbReference type="SMART" id="SM00228">
    <property type="entry name" value="PDZ"/>
    <property type="match status" value="1"/>
</dbReference>
<dbReference type="SMART" id="SM00233">
    <property type="entry name" value="PH"/>
    <property type="match status" value="2"/>
</dbReference>
<dbReference type="SUPFAM" id="SSF50156">
    <property type="entry name" value="PDZ domain-like"/>
    <property type="match status" value="1"/>
</dbReference>
<dbReference type="SUPFAM" id="SSF50729">
    <property type="entry name" value="PH domain-like"/>
    <property type="match status" value="1"/>
</dbReference>
<dbReference type="PROSITE" id="PS50106">
    <property type="entry name" value="PDZ"/>
    <property type="match status" value="1"/>
</dbReference>
<dbReference type="PROSITE" id="PS50003">
    <property type="entry name" value="PH_DOMAIN"/>
    <property type="match status" value="1"/>
</dbReference>
<gene>
    <name type="primary">Snta1</name>
    <name type="synonym">Snt1</name>
</gene>
<reference key="1">
    <citation type="journal article" date="1993" name="Neuron">
        <title>Two forms of mouse syntrophin, a 58 kDa dystrophin-associated protein, differ in primary structure and tissue distribution.</title>
        <authorList>
            <person name="Adams M.E."/>
            <person name="Butler M.H."/>
            <person name="Dwyer T.M."/>
            <person name="Peters M.F."/>
            <person name="Murnane A.A."/>
            <person name="Froehner S.C."/>
        </authorList>
    </citation>
    <scope>NUCLEOTIDE SEQUENCE [MRNA]</scope>
    <scope>PROTEIN SEQUENCE OF 155-161; 165-171; 213-228; 247-261 AND 271-307</scope>
    <source>
        <tissue>Muscle</tissue>
    </source>
</reference>
<reference key="2">
    <citation type="journal article" date="2004" name="Genome Res.">
        <title>The status, quality, and expansion of the NIH full-length cDNA project: the Mammalian Gene Collection (MGC).</title>
        <authorList>
            <consortium name="The MGC Project Team"/>
        </authorList>
    </citation>
    <scope>NUCLEOTIDE SEQUENCE [LARGE SCALE MRNA]</scope>
    <source>
        <tissue>Mammary tumor</tissue>
    </source>
</reference>
<reference key="3">
    <citation type="submission" date="2009-01" db="UniProtKB">
        <authorList>
            <person name="Lubec G."/>
            <person name="Sunyer B."/>
            <person name="Chen W.-Q."/>
        </authorList>
    </citation>
    <scope>PROTEIN SEQUENCE OF 7-16</scope>
    <scope>IDENTIFICATION BY MASS SPECTROMETRY</scope>
    <source>
        <strain>OF1</strain>
        <tissue>Hippocampus</tissue>
    </source>
</reference>
<reference key="4">
    <citation type="journal article" date="1995" name="Biochemistry">
        <title>Interactions between dystrophin glycoprotein complex proteins.</title>
        <authorList>
            <person name="Madhavan R."/>
            <person name="Jarrett H.W."/>
        </authorList>
    </citation>
    <scope>INTERACTION WITH SNTB1; SNTB2; DMD; SGCA AND SGCG</scope>
</reference>
<reference key="5">
    <citation type="journal article" date="1996" name="Cell">
        <title>Interaction of nitric oxide synthase with the postsynaptic density protein PSD-95 and alpha1-syntrophin mediated by PDZ domains.</title>
        <authorList>
            <person name="Brenman J.E."/>
            <person name="Chao D.S."/>
            <person name="Gee S.H."/>
            <person name="McGee A.W."/>
            <person name="Craven S.E."/>
            <person name="Santillano D.R."/>
            <person name="Wu Z."/>
            <person name="Huang F."/>
            <person name="Xia H."/>
            <person name="Peters M.F."/>
            <person name="Froehner S.C."/>
            <person name="Bredt D.S."/>
        </authorList>
    </citation>
    <scope>INTERACTION WITH NOS1</scope>
</reference>
<reference key="6">
    <citation type="journal article" date="1997" name="Biochemistry">
        <title>Ca2+-calmodulin binding to mouse alpha1 syntrophin: syntrophin is also a Ca2+-binding protein.</title>
        <authorList>
            <person name="Newbell B.J."/>
            <person name="Anderson J.T."/>
            <person name="Jarrett H.W."/>
        </authorList>
    </citation>
    <scope>INTERACTION WITH CALMODULIN</scope>
</reference>
<reference key="7">
    <citation type="journal article" date="1997" name="J. Cell Biol.">
        <title>Differential association of syntrophin pairs with the dystrophin complex.</title>
        <authorList>
            <person name="Peters M.F."/>
            <person name="Adams M.E."/>
            <person name="Froehner S.C."/>
        </authorList>
    </citation>
    <scope>SUBCELLULAR LOCATION</scope>
    <scope>TISSUE SPECIFICITY</scope>
    <scope>INTERACTION WITH DMD; DTNA AND UTRN</scope>
</reference>
<reference key="8">
    <citation type="journal article" date="1998" name="J. Neurosci.">
        <title>Interaction of muscle and brain sodium channels with multiple members of the syntrophin family of dystrophin-associated proteins.</title>
        <authorList>
            <person name="Gee S.H."/>
            <person name="Madhavan R."/>
            <person name="Levinson S.R."/>
            <person name="Caldwell J.H."/>
            <person name="Sealock R."/>
            <person name="Froehner S.C."/>
        </authorList>
    </citation>
    <scope>INTERACTION WITH SCN4A AND SCN5A</scope>
</reference>
<reference key="9">
    <citation type="journal article" date="1999" name="Biochemistry">
        <title>Pleckstrin homology domain 1 of mouse alpha 1-syntrophin binds phosphatidylinositol 4,5-bisphosphate.</title>
        <authorList>
            <person name="Chockalingam P.S."/>
            <person name="Gee S.H."/>
            <person name="Jarrett H.W."/>
        </authorList>
    </citation>
    <scope>ASSOCIATION WITH PHOSPHATIDYLINOSITOL 4,5-BIPHOSPHATE</scope>
</reference>
<reference key="10">
    <citation type="journal article" date="1999" name="Biochim. Biophys. Acta">
        <title>Phosphorylation of dystrophin and alpha-syntrophin by Ca(2+)-calmodulin dependent protein kinase II.</title>
        <authorList>
            <person name="Madhavan R."/>
            <person name="Jarrett H.W."/>
        </authorList>
    </citation>
    <scope>PHOSPHORYLATION BY CAM-KINASE II</scope>
</reference>
<reference key="11">
    <citation type="journal article" date="2000" name="Biochemistry">
        <title>Oligomerization of mouse alpha 1-syntrophin and self-association of its pleckstrin homology domain 1 containing sequences.</title>
        <authorList>
            <person name="Oak S.A."/>
            <person name="Jarrett H.W."/>
        </authorList>
    </citation>
    <scope>OLIGOMERIZATION</scope>
</reference>
<reference key="12">
    <citation type="journal article" date="2000" name="J. Cell Sci.">
        <title>Assembly of multiple dystrobrevin-containing complexes in the kidney.</title>
        <authorList>
            <person name="Loh N.Y."/>
            <person name="Newey S.E."/>
            <person name="Davies K.E."/>
            <person name="Blake D.J."/>
        </authorList>
    </citation>
    <scope>INTERACTION WITH DTNB</scope>
</reference>
<reference key="13">
    <citation type="journal article" date="2001" name="Biochemistry">
        <title>Mouse alpha1-syntrophin binding to Grb2: further evidence of a role for syntrophin in cell signaling.</title>
        <authorList>
            <person name="Oak S.A."/>
            <person name="Russo K."/>
            <person name="Petrucci T.C."/>
            <person name="Jarrett H.W."/>
        </authorList>
    </citation>
    <scope>INTERACTION WITH GRB2</scope>
</reference>
<reference key="14">
    <citation type="journal article" date="2007" name="Proc. Natl. Acad. Sci. U.S.A.">
        <title>Large-scale phosphorylation analysis of mouse liver.</title>
        <authorList>
            <person name="Villen J."/>
            <person name="Beausoleil S.A."/>
            <person name="Gerber S.A."/>
            <person name="Gygi S.P."/>
        </authorList>
    </citation>
    <scope>PHOSPHORYLATION [LARGE SCALE ANALYSIS] AT SER-183 AND SER-187</scope>
    <scope>IDENTIFICATION BY MASS SPECTROMETRY [LARGE SCALE ANALYSIS]</scope>
    <source>
        <tissue>Liver</tissue>
    </source>
</reference>
<reference key="15">
    <citation type="journal article" date="2010" name="Cell">
        <title>A tissue-specific atlas of mouse protein phosphorylation and expression.</title>
        <authorList>
            <person name="Huttlin E.L."/>
            <person name="Jedrychowski M.P."/>
            <person name="Elias J.E."/>
            <person name="Goswami T."/>
            <person name="Rad R."/>
            <person name="Beausoleil S.A."/>
            <person name="Villen J."/>
            <person name="Haas W."/>
            <person name="Sowa M.E."/>
            <person name="Gygi S.P."/>
        </authorList>
    </citation>
    <scope>PHOSPHORYLATION [LARGE SCALE ANALYSIS] AT SER-95; SER-183; SER-187 AND SER-194</scope>
    <scope>IDENTIFICATION BY MASS SPECTROMETRY [LARGE SCALE ANALYSIS]</scope>
    <source>
        <tissue>Brain</tissue>
        <tissue>Brown adipose tissue</tissue>
        <tissue>Heart</tissue>
        <tissue>Kidney</tissue>
        <tissue>Liver</tissue>
        <tissue>Lung</tissue>
        <tissue>Pancreas</tissue>
        <tissue>Spleen</tissue>
        <tissue>Testis</tissue>
    </source>
</reference>
<reference key="16">
    <citation type="journal article" date="2012" name="J. Biol. Chem.">
        <title>Myocilin interacts with syntrophins and is member of dystrophin-associated protein complex.</title>
        <authorList>
            <person name="Joe M.K."/>
            <person name="Kee C."/>
            <person name="Tomarev S.I."/>
        </authorList>
    </citation>
    <scope>INTERACTION WITH MYOC</scope>
</reference>
<name>SNTA1_MOUSE</name>
<comment type="function">
    <text>Adapter protein that binds to and probably organizes the subcellular localization of a variety of membrane proteins. May link various receptors to the actin cytoskeleton and the extracellular matrix via the dystrophin glycoprotein complex. Plays an important role in synapse formation and in the organization of UTRN and acetylcholine receptors at the neuromuscular synapse. Binds to phosphatidylinositol 4,5-bisphosphate.</text>
</comment>
<comment type="subunit">
    <text evidence="1 7 8 9 10 11 12 13 14">Monomer and homodimer. Interacts with MAPK12, TGFA, GA and F-actin (By similarity). Interacts with the other members of the syntrophin family: SNTB1 and SNTB2; with dystrophin protein DMD and related proteins DTNA and UTRN; SGCG and SGCA of the dystrophin glycoprotein complex; NOS1; GRB2; calmodulin and the sodium channel proteins SCN4A and SCN5A. Interacts with MYOC; regulates muscle hypertrophy. Interacts with DTNB (PubMed:10893187).</text>
</comment>
<comment type="interaction">
    <interactant intactId="EBI-295952">
        <id>Q61234</id>
    </interactant>
    <interactant intactId="EBI-295928">
        <id>P11531</id>
        <label>Dmd</label>
    </interactant>
    <organismsDiffer>false</organismsDiffer>
    <experiments>4</experiments>
</comment>
<comment type="interaction">
    <interactant intactId="EBI-295952">
        <id>Q61234</id>
    </interactant>
    <interactant intactId="EBI-1688">
        <id>Q60631</id>
        <label>Grb2</label>
    </interactant>
    <organismsDiffer>false</organismsDiffer>
    <experiments>3</experiments>
</comment>
<comment type="interaction">
    <interactant intactId="EBI-295952">
        <id>Q61234</id>
    </interactant>
    <interactant intactId="EBI-489993">
        <id>P25100</id>
        <label>ADRA1D</label>
    </interactant>
    <organismsDiffer>true</organismsDiffer>
    <experiments>3</experiments>
</comment>
<comment type="subcellular location">
    <subcellularLocation>
        <location evidence="13">Cell membrane</location>
        <location evidence="13">Sarcolemma</location>
        <topology evidence="13">Peripheral membrane protein</topology>
        <orientation evidence="13">Cytoplasmic side</orientation>
    </subcellularLocation>
    <subcellularLocation>
        <location evidence="13">Cell junction</location>
    </subcellularLocation>
    <subcellularLocation>
        <location evidence="13">Cytoplasm</location>
        <location evidence="13">Cytoskeleton</location>
    </subcellularLocation>
    <text>In skeletal muscle, it localizes at the cytoplasmic side of the sarcolemmal membrane and at neuromuscular junctions.</text>
</comment>
<comment type="tissue specificity">
    <text evidence="13">High expression in skeletal muscle. Expressed at intermediate level in heart, kidney and brain, and at low level in intestine, liver, lung and testis.</text>
</comment>
<comment type="domain">
    <text>The PH 1 domain mediates the oligomerization in a calcium dependent manner, and the association with the phosphatidylinositol 4,5-bisphosphate.</text>
</comment>
<comment type="domain">
    <text>The PDZ domain binds to the last three or four amino acids of ion channels and receptor proteins. The association with dystrophin or related proteins probably leaves the PDZ domain available to recruit proteins to the membrane.</text>
</comment>
<comment type="domain">
    <text>The SU domain binds calmodulin in a calcium-dependent manner.</text>
</comment>
<comment type="PTM">
    <text evidence="6">Phosphorylated by CaM-kinase II. Phosphorylation may inhibit the interaction with DMD.</text>
</comment>
<comment type="similarity">
    <text evidence="15">Belongs to the syntrophin family.</text>
</comment>
<accession>Q61234</accession>
<accession>Q8VEF3</accession>
<evidence type="ECO:0000250" key="1"/>
<evidence type="ECO:0000250" key="2">
    <source>
        <dbReference type="UniProtKB" id="Q13424"/>
    </source>
</evidence>
<evidence type="ECO:0000255" key="3">
    <source>
        <dbReference type="PROSITE-ProRule" id="PRU00143"/>
    </source>
</evidence>
<evidence type="ECO:0000255" key="4">
    <source>
        <dbReference type="PROSITE-ProRule" id="PRU00145"/>
    </source>
</evidence>
<evidence type="ECO:0000256" key="5">
    <source>
        <dbReference type="SAM" id="MobiDB-lite"/>
    </source>
</evidence>
<evidence type="ECO:0000269" key="6">
    <source>
    </source>
</evidence>
<evidence type="ECO:0000269" key="7">
    <source>
    </source>
</evidence>
<evidence type="ECO:0000269" key="8">
    <source>
    </source>
</evidence>
<evidence type="ECO:0000269" key="9">
    <source>
    </source>
</evidence>
<evidence type="ECO:0000269" key="10">
    <source>
    </source>
</evidence>
<evidence type="ECO:0000269" key="11">
    <source>
    </source>
</evidence>
<evidence type="ECO:0000269" key="12">
    <source>
    </source>
</evidence>
<evidence type="ECO:0000269" key="13">
    <source>
    </source>
</evidence>
<evidence type="ECO:0000269" key="14">
    <source>
    </source>
</evidence>
<evidence type="ECO:0000305" key="15"/>
<evidence type="ECO:0007744" key="16">
    <source>
    </source>
</evidence>
<evidence type="ECO:0007744" key="17">
    <source>
    </source>
</evidence>
<evidence type="ECO:0007829" key="18">
    <source>
        <dbReference type="PDB" id="1QAV"/>
    </source>
</evidence>
<evidence type="ECO:0007829" key="19">
    <source>
        <dbReference type="PDB" id="1Z86"/>
    </source>
</evidence>
<evidence type="ECO:0007829" key="20">
    <source>
        <dbReference type="PDB" id="1Z87"/>
    </source>
</evidence>
<evidence type="ECO:0007829" key="21">
    <source>
        <dbReference type="PDB" id="2ADZ"/>
    </source>
</evidence>
<protein>
    <recommendedName>
        <fullName>Alpha-1-syntrophin</fullName>
    </recommendedName>
    <alternativeName>
        <fullName>59 kDa dystrophin-associated protein A1 acidic component 1</fullName>
    </alternativeName>
    <alternativeName>
        <fullName>Syntrophin-1</fullName>
    </alternativeName>
</protein>
<sequence length="503" mass="53665">MASGRRAPRTGLLELRCGAGSGAGGERWQRVLLSLAEDALTVSPADGEPGPEPEPAQLNGAAEPGAAPPQLPEALLLQRRRVTVRKADAGGLGISIKGGRENKMPILISKIFKGLAADQTEALFVGDAILSVNGEDLSSATHDEAVQALKKTGKEVVLEVKYMKEVSPYFKNSAGGTSVGWDSPPASPLQRQPSSPGPQPRNLSEAKHVSLKMAYVSRRCTPTDPEPRYLEICAADGQDAVFLRAKDEASARSWAGAIQAQIGTFIPWVKDELQALLTATGTAGSQDIKQIGWLTEQLPSGGTAPTLALLTEKELLFYCSLPQSREALSRPTRTAPLIATSSAHRLVHSGPSKGSVPYDAELSFALRTGTRHGVDTHLFSVESPQELAAWTRQLVDGCHRAAEGIQEVSTACTWNGRPCSLSVHIDKGFTLWAAEPGAARAMLLRQPFEKLQMSSDDGTSLLFLDFGGAEGEIQLDLHSCPKTMVFIIHSFLSAKVTRLGLLA</sequence>
<organism>
    <name type="scientific">Mus musculus</name>
    <name type="common">Mouse</name>
    <dbReference type="NCBI Taxonomy" id="10090"/>
    <lineage>
        <taxon>Eukaryota</taxon>
        <taxon>Metazoa</taxon>
        <taxon>Chordata</taxon>
        <taxon>Craniata</taxon>
        <taxon>Vertebrata</taxon>
        <taxon>Euteleostomi</taxon>
        <taxon>Mammalia</taxon>
        <taxon>Eutheria</taxon>
        <taxon>Euarchontoglires</taxon>
        <taxon>Glires</taxon>
        <taxon>Rodentia</taxon>
        <taxon>Myomorpha</taxon>
        <taxon>Muroidea</taxon>
        <taxon>Muridae</taxon>
        <taxon>Murinae</taxon>
        <taxon>Mus</taxon>
        <taxon>Mus</taxon>
    </lineage>
</organism>